<gene>
    <name type="primary">sre-2</name>
    <name type="ORF">C41C4.2</name>
</gene>
<reference key="1">
    <citation type="journal article" date="1998" name="Science">
        <title>Genome sequence of the nematode C. elegans: a platform for investigating biology.</title>
        <authorList>
            <consortium name="The C. elegans sequencing consortium"/>
        </authorList>
    </citation>
    <scope>NUCLEOTIDE SEQUENCE [LARGE SCALE GENOMIC DNA]</scope>
    <source>
        <strain>Bristol N2</strain>
    </source>
</reference>
<comment type="subcellular location">
    <subcellularLocation>
        <location evidence="2">Cell membrane</location>
        <topology evidence="2">Multi-pass membrane protein</topology>
    </subcellularLocation>
</comment>
<comment type="similarity">
    <text evidence="2">Belongs to the nematode receptor-like protein sre family.</text>
</comment>
<protein>
    <recommendedName>
        <fullName>Serpentine receptor class epsilon-2</fullName>
        <shortName>Protein sre-2</shortName>
    </recommendedName>
</protein>
<sequence length="369" mass="43578">MLIQYHKISNNDPNRIQLLSMIFCEIILLIFELFEFAAIIFNMSRYQFHFNLKVVVGYAIFAYWFDIIARITIAFFEIGLFNLDDQTIAVETEKLPWNYKNMFFMLLFCCSTYRVYFMFLICSVTLLLAVERFLATIWVSTYESVQHKWVSIVLTSTNSIAGIFGSLLFHYELIFDTAVWCSLGLCFNFVSIFLYVILFNSNKSKIELCQTREITQSYTLSLRFQLNENLKIMNWIKNSILVVTCFNTLLAGFLIASNNEYLKNDYPVLVKCCHTFLNLGIAIYAQVVFFVAILADRHFRTYFLRFKPIRVFTKPFFGRIFPEDFKIKKILSTSDETNVYFSKLSLQWDEQIIRSSHVVVAKKKRFWRV</sequence>
<dbReference type="EMBL" id="Z48045">
    <property type="protein sequence ID" value="CAA88099.5"/>
    <property type="molecule type" value="Genomic_DNA"/>
</dbReference>
<dbReference type="PIR" id="T19873">
    <property type="entry name" value="T19873"/>
</dbReference>
<dbReference type="RefSeq" id="NP_495698.4">
    <property type="nucleotide sequence ID" value="NM_063297.4"/>
</dbReference>
<dbReference type="FunCoup" id="Q09273">
    <property type="interactions" value="146"/>
</dbReference>
<dbReference type="STRING" id="6239.C41C4.2.1"/>
<dbReference type="PaxDb" id="6239-C41C4.2"/>
<dbReference type="EnsemblMetazoa" id="C41C4.2.1">
    <property type="protein sequence ID" value="C41C4.2.1"/>
    <property type="gene ID" value="WBGene00005150"/>
</dbReference>
<dbReference type="GeneID" id="174302"/>
<dbReference type="KEGG" id="cel:CELE_C41C4.2"/>
<dbReference type="UCSC" id="C41C4.2">
    <property type="organism name" value="c. elegans"/>
</dbReference>
<dbReference type="AGR" id="WB:WBGene00005150"/>
<dbReference type="CTD" id="174302"/>
<dbReference type="WormBase" id="C41C4.2">
    <property type="protein sequence ID" value="CE44368"/>
    <property type="gene ID" value="WBGene00005150"/>
    <property type="gene designation" value="sre-2"/>
</dbReference>
<dbReference type="eggNOG" id="ENOG502TH80">
    <property type="taxonomic scope" value="Eukaryota"/>
</dbReference>
<dbReference type="GeneTree" id="ENSGT00970000197419"/>
<dbReference type="HOGENOM" id="CLU_795071_0_0_1"/>
<dbReference type="InParanoid" id="Q09273"/>
<dbReference type="OMA" id="IWVSTYE"/>
<dbReference type="OrthoDB" id="5874078at2759"/>
<dbReference type="PhylomeDB" id="Q09273"/>
<dbReference type="PRO" id="PR:Q09273"/>
<dbReference type="Proteomes" id="UP000001940">
    <property type="component" value="Chromosome II"/>
</dbReference>
<dbReference type="Bgee" id="WBGene00005150">
    <property type="expression patterns" value="Expressed in multicellular organism and 1 other cell type or tissue"/>
</dbReference>
<dbReference type="GO" id="GO:0005886">
    <property type="term" value="C:plasma membrane"/>
    <property type="evidence" value="ECO:0007669"/>
    <property type="project" value="UniProtKB-SubCell"/>
</dbReference>
<dbReference type="GO" id="GO:0004930">
    <property type="term" value="F:G protein-coupled receptor activity"/>
    <property type="evidence" value="ECO:0007669"/>
    <property type="project" value="UniProtKB-KW"/>
</dbReference>
<dbReference type="GO" id="GO:0007606">
    <property type="term" value="P:sensory perception of chemical stimulus"/>
    <property type="evidence" value="ECO:0007669"/>
    <property type="project" value="InterPro"/>
</dbReference>
<dbReference type="InterPro" id="IPR004151">
    <property type="entry name" value="7TM_GPCR_serpentine_rcpt_Sre"/>
</dbReference>
<dbReference type="PANTHER" id="PTHR23128:SF139">
    <property type="entry name" value="SERPENTINE RECEPTOR CLASS EPSILON-1-RELATED"/>
    <property type="match status" value="1"/>
</dbReference>
<dbReference type="PANTHER" id="PTHR23128">
    <property type="entry name" value="SERPENTINE RECEPTOR, CLASS E (EPSILON)-RELATED"/>
    <property type="match status" value="1"/>
</dbReference>
<dbReference type="Pfam" id="PF03125">
    <property type="entry name" value="Sre"/>
    <property type="match status" value="1"/>
</dbReference>
<feature type="chain" id="PRO_0000104535" description="Serpentine receptor class epsilon-2">
    <location>
        <begin position="1"/>
        <end position="369"/>
    </location>
</feature>
<feature type="topological domain" description="Extracellular" evidence="1">
    <location>
        <begin position="1"/>
        <end position="20"/>
    </location>
</feature>
<feature type="transmembrane region" description="Helical; Name=1" evidence="1">
    <location>
        <begin position="21"/>
        <end position="41"/>
    </location>
</feature>
<feature type="topological domain" description="Cytoplasmic" evidence="1">
    <location>
        <begin position="42"/>
        <end position="55"/>
    </location>
</feature>
<feature type="transmembrane region" description="Helical; Name=2" evidence="1">
    <location>
        <begin position="56"/>
        <end position="76"/>
    </location>
</feature>
<feature type="topological domain" description="Extracellular" evidence="1">
    <location>
        <begin position="77"/>
        <end position="118"/>
    </location>
</feature>
<feature type="transmembrane region" description="Helical; Name=3" evidence="1">
    <location>
        <begin position="119"/>
        <end position="139"/>
    </location>
</feature>
<feature type="topological domain" description="Cytoplasmic" evidence="1">
    <location>
        <begin position="140"/>
        <end position="148"/>
    </location>
</feature>
<feature type="transmembrane region" description="Helical; Name=4" evidence="1">
    <location>
        <begin position="149"/>
        <end position="169"/>
    </location>
</feature>
<feature type="topological domain" description="Extracellular" evidence="1">
    <location>
        <begin position="170"/>
        <end position="178"/>
    </location>
</feature>
<feature type="transmembrane region" description="Helical; Name=5" evidence="1">
    <location>
        <begin position="179"/>
        <end position="199"/>
    </location>
</feature>
<feature type="topological domain" description="Cytoplasmic" evidence="1">
    <location>
        <begin position="200"/>
        <end position="234"/>
    </location>
</feature>
<feature type="transmembrane region" description="Helical; Name=6" evidence="1">
    <location>
        <begin position="235"/>
        <end position="255"/>
    </location>
</feature>
<feature type="topological domain" description="Extracellular" evidence="1">
    <location>
        <begin position="256"/>
        <end position="274"/>
    </location>
</feature>
<feature type="transmembrane region" description="Helical; Name=7" evidence="1">
    <location>
        <begin position="275"/>
        <end position="295"/>
    </location>
</feature>
<feature type="topological domain" description="Cytoplasmic" evidence="1">
    <location>
        <begin position="296"/>
        <end position="369"/>
    </location>
</feature>
<organism>
    <name type="scientific">Caenorhabditis elegans</name>
    <dbReference type="NCBI Taxonomy" id="6239"/>
    <lineage>
        <taxon>Eukaryota</taxon>
        <taxon>Metazoa</taxon>
        <taxon>Ecdysozoa</taxon>
        <taxon>Nematoda</taxon>
        <taxon>Chromadorea</taxon>
        <taxon>Rhabditida</taxon>
        <taxon>Rhabditina</taxon>
        <taxon>Rhabditomorpha</taxon>
        <taxon>Rhabditoidea</taxon>
        <taxon>Rhabditidae</taxon>
        <taxon>Peloderinae</taxon>
        <taxon>Caenorhabditis</taxon>
    </lineage>
</organism>
<proteinExistence type="inferred from homology"/>
<accession>Q09273</accession>
<name>SRE2_CAEEL</name>
<evidence type="ECO:0000255" key="1"/>
<evidence type="ECO:0000305" key="2"/>
<keyword id="KW-1003">Cell membrane</keyword>
<keyword id="KW-0297">G-protein coupled receptor</keyword>
<keyword id="KW-0472">Membrane</keyword>
<keyword id="KW-0675">Receptor</keyword>
<keyword id="KW-1185">Reference proteome</keyword>
<keyword id="KW-0807">Transducer</keyword>
<keyword id="KW-0812">Transmembrane</keyword>
<keyword id="KW-1133">Transmembrane helix</keyword>